<comment type="function">
    <text evidence="1">Component of the large ribosomal subunit. The ribosome is a large ribonucleoprotein complex responsible for the synthesis of proteins in the cell.</text>
</comment>
<comment type="subunit">
    <text evidence="1">Component of the large ribosomal subunit.</text>
</comment>
<comment type="subcellular location">
    <subcellularLocation>
        <location evidence="1">Cytoplasm</location>
    </subcellularLocation>
</comment>
<comment type="PTM">
    <text evidence="2">Citrullinated by PADI4.</text>
</comment>
<comment type="similarity">
    <text evidence="4">Belongs to the eukaryotic ribosomal protein eL19 family.</text>
</comment>
<organism>
    <name type="scientific">Rattus norvegicus</name>
    <name type="common">Rat</name>
    <dbReference type="NCBI Taxonomy" id="10116"/>
    <lineage>
        <taxon>Eukaryota</taxon>
        <taxon>Metazoa</taxon>
        <taxon>Chordata</taxon>
        <taxon>Craniata</taxon>
        <taxon>Vertebrata</taxon>
        <taxon>Euteleostomi</taxon>
        <taxon>Mammalia</taxon>
        <taxon>Eutheria</taxon>
        <taxon>Euarchontoglires</taxon>
        <taxon>Glires</taxon>
        <taxon>Rodentia</taxon>
        <taxon>Myomorpha</taxon>
        <taxon>Muroidea</taxon>
        <taxon>Muridae</taxon>
        <taxon>Murinae</taxon>
        <taxon>Rattus</taxon>
    </lineage>
</organism>
<reference key="1">
    <citation type="journal article" date="1987" name="J. Biol. Chem.">
        <title>The primary structure of rat ribosomal protein L19. A determination from the sequence of nucleotides in a cDNA and from the sequence of amino acids in the protein.</title>
        <authorList>
            <person name="Chan Y.-L."/>
            <person name="Lin A."/>
            <person name="McNally J."/>
            <person name="Peleg D."/>
            <person name="Meyuhas O."/>
            <person name="Wool I.G."/>
        </authorList>
    </citation>
    <scope>NUCLEOTIDE SEQUENCE [MRNA]</scope>
    <scope>PARTIAL PROTEIN SEQUENCE</scope>
</reference>
<reference key="2">
    <citation type="journal article" date="1995" name="Genomics">
        <title>The L19 ribosomal protein gene (RPL19): gene organization, chromosomal mapping, and novel promoter region.</title>
        <authorList>
            <person name="Davies B."/>
            <person name="Fried M."/>
        </authorList>
    </citation>
    <scope>NUCLEOTIDE SEQUENCE [GENOMIC DNA]</scope>
    <source>
        <strain>Fischer</strain>
    </source>
</reference>
<reference key="3">
    <citation type="journal article" date="2004" name="Genome Res.">
        <title>The status, quality, and expansion of the NIH full-length cDNA project: the Mammalian Gene Collection (MGC).</title>
        <authorList>
            <consortium name="The MGC Project Team"/>
        </authorList>
    </citation>
    <scope>NUCLEOTIDE SEQUENCE [LARGE SCALE MRNA]</scope>
    <source>
        <tissue>Pituitary anterior lobe</tissue>
    </source>
</reference>
<feature type="chain" id="PRO_0000131172" description="Large ribosomal subunit protein eL19">
    <location>
        <begin position="1"/>
        <end position="196"/>
    </location>
</feature>
<feature type="region of interest" description="Disordered" evidence="3">
    <location>
        <begin position="157"/>
        <end position="176"/>
    </location>
</feature>
<feature type="compositionally biased region" description="Basic and acidic residues" evidence="3">
    <location>
        <begin position="159"/>
        <end position="176"/>
    </location>
</feature>
<feature type="modified residue" description="Citrulline" evidence="2">
    <location>
        <position position="5"/>
    </location>
</feature>
<feature type="modified residue" description="Phosphoserine" evidence="1">
    <location>
        <position position="13"/>
    </location>
</feature>
<feature type="modified residue" description="Citrulline" evidence="2">
    <location>
        <position position="16"/>
    </location>
</feature>
<feature type="modified residue" description="Citrulline" evidence="2">
    <location>
        <position position="38"/>
    </location>
</feature>
<feature type="modified residue" description="Phosphoserine" evidence="1">
    <location>
        <position position="164"/>
    </location>
</feature>
<feature type="modified residue" description="Phosphothreonine" evidence="1">
    <location>
        <position position="187"/>
    </location>
</feature>
<feature type="cross-link" description="Glycyl lysine isopeptide (Lys-Gly) (interchain with G-Cter in SUMO1)" evidence="1">
    <location>
        <position position="181"/>
    </location>
</feature>
<gene>
    <name type="primary">Rpl19</name>
</gene>
<protein>
    <recommendedName>
        <fullName evidence="4">Large ribosomal subunit protein eL19</fullName>
    </recommendedName>
    <alternativeName>
        <fullName>60S ribosomal protein L19</fullName>
    </alternativeName>
</protein>
<proteinExistence type="evidence at protein level"/>
<name>RL19_RAT</name>
<dbReference type="EMBL" id="J02650">
    <property type="protein sequence ID" value="AAA42071.1"/>
    <property type="molecule type" value="mRNA"/>
</dbReference>
<dbReference type="EMBL" id="X82202">
    <property type="protein sequence ID" value="CAA57685.1"/>
    <property type="molecule type" value="Genomic_DNA"/>
</dbReference>
<dbReference type="EMBL" id="BC058135">
    <property type="protein sequence ID" value="AAH58135.1"/>
    <property type="molecule type" value="mRNA"/>
</dbReference>
<dbReference type="PIR" id="A26710">
    <property type="entry name" value="R5RT19"/>
</dbReference>
<dbReference type="RefSeq" id="NP_112365.1">
    <property type="nucleotide sequence ID" value="NM_031103.1"/>
</dbReference>
<dbReference type="RefSeq" id="XP_063126021.1">
    <property type="nucleotide sequence ID" value="XM_063269951.1"/>
</dbReference>
<dbReference type="RefSeq" id="XP_063126022.1">
    <property type="nucleotide sequence ID" value="XM_063269952.1"/>
</dbReference>
<dbReference type="RefSeq" id="XP_063126023.1">
    <property type="nucleotide sequence ID" value="XM_063269953.1"/>
</dbReference>
<dbReference type="SMR" id="P84100"/>
<dbReference type="BioGRID" id="249639">
    <property type="interactions" value="3"/>
</dbReference>
<dbReference type="FunCoup" id="P84100">
    <property type="interactions" value="3030"/>
</dbReference>
<dbReference type="IntAct" id="P84100">
    <property type="interactions" value="4"/>
</dbReference>
<dbReference type="STRING" id="10116.ENSRNOP00000006359"/>
<dbReference type="iPTMnet" id="P84100"/>
<dbReference type="PhosphoSitePlus" id="P84100"/>
<dbReference type="jPOST" id="P84100"/>
<dbReference type="PaxDb" id="10116-ENSRNOP00000006359"/>
<dbReference type="Ensembl" id="ENSRNOT00000006359.6">
    <property type="protein sequence ID" value="ENSRNOP00000006359.4"/>
    <property type="gene ID" value="ENSRNOG00000004741.6"/>
</dbReference>
<dbReference type="GeneID" id="81767"/>
<dbReference type="KEGG" id="rno:81767"/>
<dbReference type="UCSC" id="RGD:621183">
    <property type="organism name" value="rat"/>
</dbReference>
<dbReference type="AGR" id="RGD:621183"/>
<dbReference type="CTD" id="6143"/>
<dbReference type="RGD" id="621183">
    <property type="gene designation" value="Rpl19"/>
</dbReference>
<dbReference type="eggNOG" id="KOG1696">
    <property type="taxonomic scope" value="Eukaryota"/>
</dbReference>
<dbReference type="GeneTree" id="ENSGT00390000012628"/>
<dbReference type="HOGENOM" id="CLU_083919_0_1_1"/>
<dbReference type="InParanoid" id="P84100"/>
<dbReference type="OrthoDB" id="84803at9989"/>
<dbReference type="PhylomeDB" id="P84100"/>
<dbReference type="TreeFam" id="TF313598"/>
<dbReference type="Reactome" id="R-RNO-156827">
    <property type="pathway name" value="L13a-mediated translational silencing of Ceruloplasmin expression"/>
</dbReference>
<dbReference type="Reactome" id="R-RNO-1799339">
    <property type="pathway name" value="SRP-dependent cotranslational protein targeting to membrane"/>
</dbReference>
<dbReference type="Reactome" id="R-RNO-6791226">
    <property type="pathway name" value="Major pathway of rRNA processing in the nucleolus and cytosol"/>
</dbReference>
<dbReference type="Reactome" id="R-RNO-72689">
    <property type="pathway name" value="Formation of a pool of free 40S subunits"/>
</dbReference>
<dbReference type="Reactome" id="R-RNO-72706">
    <property type="pathway name" value="GTP hydrolysis and joining of the 60S ribosomal subunit"/>
</dbReference>
<dbReference type="Reactome" id="R-RNO-975956">
    <property type="pathway name" value="Nonsense Mediated Decay (NMD) independent of the Exon Junction Complex (EJC)"/>
</dbReference>
<dbReference type="Reactome" id="R-RNO-975957">
    <property type="pathway name" value="Nonsense Mediated Decay (NMD) enhanced by the Exon Junction Complex (EJC)"/>
</dbReference>
<dbReference type="PRO" id="PR:P84100"/>
<dbReference type="Proteomes" id="UP000002494">
    <property type="component" value="Chromosome 10"/>
</dbReference>
<dbReference type="Bgee" id="ENSRNOG00000004741">
    <property type="expression patterns" value="Expressed in thymus and 19 other cell types or tissues"/>
</dbReference>
<dbReference type="GO" id="GO:0005737">
    <property type="term" value="C:cytoplasm"/>
    <property type="evidence" value="ECO:0000266"/>
    <property type="project" value="RGD"/>
</dbReference>
<dbReference type="GO" id="GO:0022625">
    <property type="term" value="C:cytosolic large ribosomal subunit"/>
    <property type="evidence" value="ECO:0000314"/>
    <property type="project" value="RGD"/>
</dbReference>
<dbReference type="GO" id="GO:0022626">
    <property type="term" value="C:cytosolic ribosome"/>
    <property type="evidence" value="ECO:0000266"/>
    <property type="project" value="RGD"/>
</dbReference>
<dbReference type="GO" id="GO:0045202">
    <property type="term" value="C:synapse"/>
    <property type="evidence" value="ECO:0000266"/>
    <property type="project" value="RGD"/>
</dbReference>
<dbReference type="GO" id="GO:1990932">
    <property type="term" value="F:5.8S rRNA binding"/>
    <property type="evidence" value="ECO:0000314"/>
    <property type="project" value="RGD"/>
</dbReference>
<dbReference type="GO" id="GO:0070180">
    <property type="term" value="F:large ribosomal subunit rRNA binding"/>
    <property type="evidence" value="ECO:0000314"/>
    <property type="project" value="RGD"/>
</dbReference>
<dbReference type="GO" id="GO:0003723">
    <property type="term" value="F:RNA binding"/>
    <property type="evidence" value="ECO:0000318"/>
    <property type="project" value="GO_Central"/>
</dbReference>
<dbReference type="GO" id="GO:0003735">
    <property type="term" value="F:structural constituent of ribosome"/>
    <property type="evidence" value="ECO:0000266"/>
    <property type="project" value="RGD"/>
</dbReference>
<dbReference type="GO" id="GO:0002181">
    <property type="term" value="P:cytoplasmic translation"/>
    <property type="evidence" value="ECO:0000266"/>
    <property type="project" value="RGD"/>
</dbReference>
<dbReference type="GO" id="GO:0097421">
    <property type="term" value="P:liver regeneration"/>
    <property type="evidence" value="ECO:0000270"/>
    <property type="project" value="RGD"/>
</dbReference>
<dbReference type="CDD" id="cd01417">
    <property type="entry name" value="Ribosomal_L19e_E"/>
    <property type="match status" value="1"/>
</dbReference>
<dbReference type="FunFam" id="1.10.1200.240:FF:000001">
    <property type="entry name" value="Ribosomal protein L19"/>
    <property type="match status" value="1"/>
</dbReference>
<dbReference type="FunFam" id="1.10.1650.10:FF:000001">
    <property type="entry name" value="Ribosomal protein L19"/>
    <property type="match status" value="1"/>
</dbReference>
<dbReference type="Gene3D" id="1.10.1200.240">
    <property type="match status" value="1"/>
</dbReference>
<dbReference type="Gene3D" id="1.10.1650.10">
    <property type="match status" value="1"/>
</dbReference>
<dbReference type="HAMAP" id="MF_01475">
    <property type="entry name" value="Ribosomal_eL19"/>
    <property type="match status" value="1"/>
</dbReference>
<dbReference type="InterPro" id="IPR035970">
    <property type="entry name" value="60S_ribosomal_eL19_sf"/>
</dbReference>
<dbReference type="InterPro" id="IPR039547">
    <property type="entry name" value="Ribosomal_eL19"/>
</dbReference>
<dbReference type="InterPro" id="IPR023638">
    <property type="entry name" value="Ribosomal_eL19_CS"/>
</dbReference>
<dbReference type="InterPro" id="IPR000196">
    <property type="entry name" value="Ribosomal_eL19_dom"/>
</dbReference>
<dbReference type="InterPro" id="IPR015972">
    <property type="entry name" value="Ribosomal_eL19_dom1"/>
</dbReference>
<dbReference type="InterPro" id="IPR033935">
    <property type="entry name" value="Ribosomal_eL19_euk"/>
</dbReference>
<dbReference type="NCBIfam" id="NF006343">
    <property type="entry name" value="PRK08570.1"/>
    <property type="match status" value="1"/>
</dbReference>
<dbReference type="PANTHER" id="PTHR10722">
    <property type="entry name" value="60S RIBOSOMAL PROTEIN L19"/>
    <property type="match status" value="1"/>
</dbReference>
<dbReference type="Pfam" id="PF01280">
    <property type="entry name" value="Ribosomal_L19e"/>
    <property type="match status" value="1"/>
</dbReference>
<dbReference type="Pfam" id="PF25476">
    <property type="entry name" value="Ribosomal_L19e_C"/>
    <property type="match status" value="1"/>
</dbReference>
<dbReference type="SMART" id="SM01416">
    <property type="entry name" value="Ribosomal_L19e"/>
    <property type="match status" value="1"/>
</dbReference>
<dbReference type="SUPFAM" id="SSF48140">
    <property type="entry name" value="Ribosomal protein L19 (L19e)"/>
    <property type="match status" value="1"/>
</dbReference>
<dbReference type="PROSITE" id="PS00526">
    <property type="entry name" value="RIBOSOMAL_L19E"/>
    <property type="match status" value="1"/>
</dbReference>
<evidence type="ECO:0000250" key="1">
    <source>
        <dbReference type="UniProtKB" id="P84098"/>
    </source>
</evidence>
<evidence type="ECO:0000250" key="2">
    <source>
        <dbReference type="UniProtKB" id="P84099"/>
    </source>
</evidence>
<evidence type="ECO:0000256" key="3">
    <source>
        <dbReference type="SAM" id="MobiDB-lite"/>
    </source>
</evidence>
<evidence type="ECO:0000305" key="4"/>
<sequence>MSMLRLQKRLASSVLRCGKKKVWLDPNETNEIANANSRQQIRKLIKDGLIIRKPVTVHSRARCRKNTLARRKGRHMGIGKRKGTANARMPEKVTWMRRMRILRRLLRRYRESKKIDRHMYHSLYLKVKGNVFKNKRILMEHIHKLKADKARKKLLADQAEARRSKTKEARKRREERLQAKKEEIIKTLSKEEETKK</sequence>
<keyword id="KW-0164">Citrullination</keyword>
<keyword id="KW-0963">Cytoplasm</keyword>
<keyword id="KW-0903">Direct protein sequencing</keyword>
<keyword id="KW-1017">Isopeptide bond</keyword>
<keyword id="KW-0597">Phosphoprotein</keyword>
<keyword id="KW-1185">Reference proteome</keyword>
<keyword id="KW-0687">Ribonucleoprotein</keyword>
<keyword id="KW-0689">Ribosomal protein</keyword>
<keyword id="KW-0832">Ubl conjugation</keyword>
<accession>P84100</accession>
<accession>P14118</accession>
<accession>P22908</accession>